<protein>
    <recommendedName>
        <fullName evidence="4">(E)-beta-ocimene synthase TPS6FN</fullName>
        <ecNumber evidence="3">4.2.3.106</ecNumber>
    </recommendedName>
    <alternativeName>
        <fullName evidence="4">(Z)-beta-ocimene synthase TPS6FN</fullName>
        <ecNumber evidence="3">4.2.3.228</ecNumber>
    </alternativeName>
    <alternativeName>
        <fullName evidence="4">Terpene synthase 6FN</fullName>
        <shortName evidence="4">CsTPS6FN</shortName>
    </alternativeName>
</protein>
<organism>
    <name type="scientific">Cannabis sativa</name>
    <name type="common">Hemp</name>
    <name type="synonym">Marijuana</name>
    <dbReference type="NCBI Taxonomy" id="3483"/>
    <lineage>
        <taxon>Eukaryota</taxon>
        <taxon>Viridiplantae</taxon>
        <taxon>Streptophyta</taxon>
        <taxon>Embryophyta</taxon>
        <taxon>Tracheophyta</taxon>
        <taxon>Spermatophyta</taxon>
        <taxon>Magnoliopsida</taxon>
        <taxon>eudicotyledons</taxon>
        <taxon>Gunneridae</taxon>
        <taxon>Pentapetalae</taxon>
        <taxon>rosids</taxon>
        <taxon>fabids</taxon>
        <taxon>Rosales</taxon>
        <taxon>Cannabaceae</taxon>
        <taxon>Cannabis</taxon>
    </lineage>
</organism>
<comment type="function">
    <text evidence="3">Involved in monoterpene (C10) olefins biosynthesis, constituants of cannabinoids and terpenoids-rich resins (PubMed:28355238). Catalyzes mainly the conversion of (2E)-geranyl diphosphate to (E)-beta-ocimene, and also produces minor products such as (Z)-beta-ocimene (PubMed:28355238).</text>
</comment>
<comment type="catalytic activity">
    <reaction evidence="3">
        <text>(2E)-geranyl diphosphate = (E)-beta-ocimene + diphosphate</text>
        <dbReference type="Rhea" id="RHEA:32691"/>
        <dbReference type="ChEBI" id="CHEBI:33019"/>
        <dbReference type="ChEBI" id="CHEBI:58057"/>
        <dbReference type="ChEBI" id="CHEBI:64280"/>
        <dbReference type="EC" id="4.2.3.106"/>
    </reaction>
    <physiologicalReaction direction="left-to-right" evidence="3">
        <dbReference type="Rhea" id="RHEA:32692"/>
    </physiologicalReaction>
</comment>
<comment type="catalytic activity">
    <reaction evidence="3">
        <text>(2E)-geranyl diphosphate = (Z)-beta-ocimene + diphosphate</text>
        <dbReference type="Rhea" id="RHEA:68824"/>
        <dbReference type="ChEBI" id="CHEBI:33019"/>
        <dbReference type="ChEBI" id="CHEBI:58057"/>
        <dbReference type="ChEBI" id="CHEBI:87574"/>
        <dbReference type="EC" id="4.2.3.228"/>
    </reaction>
    <physiologicalReaction direction="left-to-right" evidence="3">
        <dbReference type="Rhea" id="RHEA:68825"/>
    </physiologicalReaction>
</comment>
<comment type="cofactor">
    <cofactor evidence="1">
        <name>Mg(2+)</name>
        <dbReference type="ChEBI" id="CHEBI:18420"/>
    </cofactor>
    <cofactor evidence="1">
        <name>Mn(2+)</name>
        <dbReference type="ChEBI" id="CHEBI:29035"/>
    </cofactor>
    <text evidence="1">Binds 3 Mg(2+) or Mn(2+) ions per subunit.</text>
</comment>
<comment type="pathway">
    <text evidence="3">Secondary metabolite biosynthesis; terpenoid biosynthesis.</text>
</comment>
<comment type="tissue specificity">
    <text evidence="3">Expressed in glandular trichomes two to four weeks after flowering onset.</text>
</comment>
<comment type="domain">
    <text evidence="2">The Asp-Asp-Xaa-Xaa-Asp/Glu (DDXXD/E) motif is important for the catalytic activity, presumably through binding to Mg(2+).</text>
</comment>
<comment type="similarity">
    <text evidence="5">Belongs to the terpene synthase family. Tpsb subfamily.</text>
</comment>
<reference key="1">
    <citation type="journal article" date="2017" name="PLoS ONE">
        <title>Terpene synthases from Cannabis sativa.</title>
        <authorList>
            <person name="Booth J.K."/>
            <person name="Page J.E."/>
            <person name="Bohlmann J."/>
        </authorList>
    </citation>
    <scope>NUCLEOTIDE SEQUENCE [MRNA]</scope>
    <scope>FUNCTION</scope>
    <scope>CATALYTIC ACTIVITY</scope>
    <scope>PATHWAY</scope>
    <scope>TISSUE SPECIFICITY</scope>
    <source>
        <strain>cv. Finola</strain>
    </source>
</reference>
<evidence type="ECO:0000250" key="1">
    <source>
        <dbReference type="UniProtKB" id="A0A1C9J6A7"/>
    </source>
</evidence>
<evidence type="ECO:0000250" key="2">
    <source>
        <dbReference type="UniProtKB" id="Q40577"/>
    </source>
</evidence>
<evidence type="ECO:0000269" key="3">
    <source>
    </source>
</evidence>
<evidence type="ECO:0000303" key="4">
    <source>
    </source>
</evidence>
<evidence type="ECO:0000305" key="5"/>
<feature type="chain" id="PRO_0000460900" description="(E)-beta-ocimene synthase TPS6FN">
    <location>
        <begin position="1"/>
        <end position="594"/>
    </location>
</feature>
<feature type="short sequence motif" description="DDXXD motif" evidence="2">
    <location>
        <begin position="340"/>
        <end position="344"/>
    </location>
</feature>
<feature type="binding site" evidence="2">
    <location>
        <position position="303"/>
    </location>
    <ligand>
        <name>(2E)-geranyl diphosphate</name>
        <dbReference type="ChEBI" id="CHEBI:58057"/>
    </ligand>
</feature>
<feature type="binding site" evidence="2">
    <location>
        <position position="340"/>
    </location>
    <ligand>
        <name>(2E)-geranyl diphosphate</name>
        <dbReference type="ChEBI" id="CHEBI:58057"/>
    </ligand>
</feature>
<feature type="binding site" evidence="2">
    <location>
        <position position="340"/>
    </location>
    <ligand>
        <name>Mg(2+)</name>
        <dbReference type="ChEBI" id="CHEBI:18420"/>
        <label>1</label>
    </ligand>
</feature>
<feature type="binding site" evidence="2">
    <location>
        <position position="340"/>
    </location>
    <ligand>
        <name>Mg(2+)</name>
        <dbReference type="ChEBI" id="CHEBI:18420"/>
        <label>2</label>
    </ligand>
</feature>
<feature type="binding site" evidence="2">
    <location>
        <position position="344"/>
    </location>
    <ligand>
        <name>(2E)-geranyl diphosphate</name>
        <dbReference type="ChEBI" id="CHEBI:58057"/>
    </ligand>
</feature>
<feature type="binding site" evidence="2">
    <location>
        <position position="344"/>
    </location>
    <ligand>
        <name>Mg(2+)</name>
        <dbReference type="ChEBI" id="CHEBI:18420"/>
        <label>1</label>
    </ligand>
</feature>
<feature type="binding site" evidence="2">
    <location>
        <position position="344"/>
    </location>
    <ligand>
        <name>Mg(2+)</name>
        <dbReference type="ChEBI" id="CHEBI:18420"/>
        <label>2</label>
    </ligand>
</feature>
<feature type="binding site" evidence="2">
    <location>
        <position position="489"/>
    </location>
    <ligand>
        <name>(2E)-geranyl diphosphate</name>
        <dbReference type="ChEBI" id="CHEBI:58057"/>
    </ligand>
</feature>
<feature type="binding site" evidence="2">
    <location>
        <position position="492"/>
    </location>
    <ligand>
        <name>(2E)-geranyl diphosphate</name>
        <dbReference type="ChEBI" id="CHEBI:58057"/>
    </ligand>
</feature>
<feature type="binding site" evidence="2">
    <location>
        <position position="492"/>
    </location>
    <ligand>
        <name>Mg(2+)</name>
        <dbReference type="ChEBI" id="CHEBI:18420"/>
        <label>3</label>
    </ligand>
</feature>
<feature type="binding site" evidence="2">
    <location>
        <position position="496"/>
    </location>
    <ligand>
        <name>Mg(2+)</name>
        <dbReference type="ChEBI" id="CHEBI:18420"/>
        <label>3</label>
    </ligand>
</feature>
<feature type="binding site" evidence="2">
    <location>
        <position position="500"/>
    </location>
    <ligand>
        <name>Mg(2+)</name>
        <dbReference type="ChEBI" id="CHEBI:18420"/>
        <label>3</label>
    </ligand>
</feature>
<keyword id="KW-0456">Lyase</keyword>
<keyword id="KW-0460">Magnesium</keyword>
<keyword id="KW-0479">Metal-binding</keyword>
<accession>A0A1V0QSH1</accession>
<proteinExistence type="evidence at protein level"/>
<sequence>MLYRPKIYTNYNIINGGTKSRLSSACYPIQCAVVNSSNAIIDRRSANFEPSIWSFDYIQSLTSQYKGEPYTSRVKKLERDVKKILVEMENSLAQLELIDTLQRLGISYRFENEINSILNKKYVNINNPNYNLYAIALEFRLLRQHGYAVPQEIFNQLKNEIENIKKNINGNDIMGILALYEASFYEKKCESILKEARIFTTECLKNYTIMISEQKKLMIDNDYDYDIEVVNHALELPLHRRTTRTEAKWFIDAYAKKQDMNPMLLELAKLDFNIVQSTHHEDLKHIFRWWRHTKLGEKLNFARDRLMECFLWNIGIRFESKFSYFRTKTAKLFELVTFIDDIYDVYGTLDELELFTKAVERWDVKMINELPEYMKMPYLVLHNTINDMVFEVLRDQEISINIQYLKKTWVDMCKSFLQEAKWYYSGYTPTLEEYIENGWISVGAPVILVHAYFFHANNNRTITNTKEIFECLEYGYYPAIIRHSAIILRFTNDLATSSEELKRGDAPTSIQCYMQEKIVSEEEAREHIKFLINEAWKEMNNDVGLYPISLTEDATNFAKMGFFIYQHGDGHSSQDNQSKQKISSLIIEPIPLYT</sequence>
<name>TS6FN_CANSA</name>
<dbReference type="EC" id="4.2.3.106" evidence="3"/>
<dbReference type="EC" id="4.2.3.228" evidence="3"/>
<dbReference type="EMBL" id="KY014563">
    <property type="protein sequence ID" value="ARE72259.1"/>
    <property type="molecule type" value="mRNA"/>
</dbReference>
<dbReference type="SMR" id="A0A1V0QSH1"/>
<dbReference type="BRENDA" id="4.2.3.106">
    <property type="organism ID" value="1159"/>
</dbReference>
<dbReference type="UniPathway" id="UPA00213"/>
<dbReference type="Proteomes" id="UP000596661">
    <property type="component" value="Unplaced"/>
</dbReference>
<dbReference type="GO" id="GO:0000287">
    <property type="term" value="F:magnesium ion binding"/>
    <property type="evidence" value="ECO:0007669"/>
    <property type="project" value="InterPro"/>
</dbReference>
<dbReference type="GO" id="GO:0010333">
    <property type="term" value="F:terpene synthase activity"/>
    <property type="evidence" value="ECO:0007669"/>
    <property type="project" value="InterPro"/>
</dbReference>
<dbReference type="GO" id="GO:0016102">
    <property type="term" value="P:diterpenoid biosynthetic process"/>
    <property type="evidence" value="ECO:0007669"/>
    <property type="project" value="InterPro"/>
</dbReference>
<dbReference type="CDD" id="cd00684">
    <property type="entry name" value="Terpene_cyclase_plant_C1"/>
    <property type="match status" value="1"/>
</dbReference>
<dbReference type="FunFam" id="1.10.600.10:FF:000007">
    <property type="entry name" value="Isoprene synthase, chloroplastic"/>
    <property type="match status" value="1"/>
</dbReference>
<dbReference type="Gene3D" id="1.10.600.10">
    <property type="entry name" value="Farnesyl Diphosphate Synthase"/>
    <property type="match status" value="1"/>
</dbReference>
<dbReference type="Gene3D" id="1.50.10.130">
    <property type="entry name" value="Terpene synthase, N-terminal domain"/>
    <property type="match status" value="1"/>
</dbReference>
<dbReference type="InterPro" id="IPR008949">
    <property type="entry name" value="Isoprenoid_synthase_dom_sf"/>
</dbReference>
<dbReference type="InterPro" id="IPR034741">
    <property type="entry name" value="Terpene_cyclase-like_1_C"/>
</dbReference>
<dbReference type="InterPro" id="IPR044814">
    <property type="entry name" value="Terpene_cyclase_plant_C1"/>
</dbReference>
<dbReference type="InterPro" id="IPR001906">
    <property type="entry name" value="Terpene_synth_N"/>
</dbReference>
<dbReference type="InterPro" id="IPR036965">
    <property type="entry name" value="Terpene_synth_N_sf"/>
</dbReference>
<dbReference type="InterPro" id="IPR050148">
    <property type="entry name" value="Terpene_synthase-like"/>
</dbReference>
<dbReference type="InterPro" id="IPR005630">
    <property type="entry name" value="Terpene_synthase_metal-bd"/>
</dbReference>
<dbReference type="InterPro" id="IPR008930">
    <property type="entry name" value="Terpenoid_cyclase/PrenylTrfase"/>
</dbReference>
<dbReference type="PANTHER" id="PTHR31225">
    <property type="entry name" value="OS04G0344100 PROTEIN-RELATED"/>
    <property type="match status" value="1"/>
</dbReference>
<dbReference type="PANTHER" id="PTHR31225:SF9">
    <property type="entry name" value="TERPENE SYNTHASE 10"/>
    <property type="match status" value="1"/>
</dbReference>
<dbReference type="Pfam" id="PF01397">
    <property type="entry name" value="Terpene_synth"/>
    <property type="match status" value="1"/>
</dbReference>
<dbReference type="Pfam" id="PF03936">
    <property type="entry name" value="Terpene_synth_C"/>
    <property type="match status" value="1"/>
</dbReference>
<dbReference type="SFLD" id="SFLDS00005">
    <property type="entry name" value="Isoprenoid_Synthase_Type_I"/>
    <property type="match status" value="1"/>
</dbReference>
<dbReference type="SFLD" id="SFLDG01019">
    <property type="entry name" value="Terpene_Cyclase_Like_1_C_Termi"/>
    <property type="match status" value="1"/>
</dbReference>
<dbReference type="SUPFAM" id="SSF48239">
    <property type="entry name" value="Terpenoid cyclases/Protein prenyltransferases"/>
    <property type="match status" value="1"/>
</dbReference>
<dbReference type="SUPFAM" id="SSF48576">
    <property type="entry name" value="Terpenoid synthases"/>
    <property type="match status" value="1"/>
</dbReference>
<gene>
    <name evidence="4" type="primary">TPS6FN</name>
</gene>